<proteinExistence type="inferred from homology"/>
<protein>
    <recommendedName>
        <fullName evidence="1">ATP synthase subunit b</fullName>
    </recommendedName>
    <alternativeName>
        <fullName evidence="1">ATP synthase F(0) sector subunit b</fullName>
    </alternativeName>
    <alternativeName>
        <fullName evidence="1">ATPase subunit I</fullName>
    </alternativeName>
    <alternativeName>
        <fullName evidence="1">F-type ATPase subunit b</fullName>
        <shortName evidence="1">F-ATPase subunit b</shortName>
    </alternativeName>
</protein>
<organism>
    <name type="scientific">Prochlorococcus marinus (strain MIT 9211)</name>
    <dbReference type="NCBI Taxonomy" id="93059"/>
    <lineage>
        <taxon>Bacteria</taxon>
        <taxon>Bacillati</taxon>
        <taxon>Cyanobacteriota</taxon>
        <taxon>Cyanophyceae</taxon>
        <taxon>Synechococcales</taxon>
        <taxon>Prochlorococcaceae</taxon>
        <taxon>Prochlorococcus</taxon>
    </lineage>
</organism>
<dbReference type="EMBL" id="CP000878">
    <property type="protein sequence ID" value="ABX09503.1"/>
    <property type="molecule type" value="Genomic_DNA"/>
</dbReference>
<dbReference type="RefSeq" id="WP_012196124.1">
    <property type="nucleotide sequence ID" value="NC_009976.1"/>
</dbReference>
<dbReference type="SMR" id="A9BCE1"/>
<dbReference type="STRING" id="93059.P9211_15721"/>
<dbReference type="KEGG" id="pmj:P9211_15721"/>
<dbReference type="eggNOG" id="COG0711">
    <property type="taxonomic scope" value="Bacteria"/>
</dbReference>
<dbReference type="HOGENOM" id="CLU_079215_8_1_3"/>
<dbReference type="OrthoDB" id="461217at2"/>
<dbReference type="Proteomes" id="UP000000788">
    <property type="component" value="Chromosome"/>
</dbReference>
<dbReference type="GO" id="GO:0031676">
    <property type="term" value="C:plasma membrane-derived thylakoid membrane"/>
    <property type="evidence" value="ECO:0007669"/>
    <property type="project" value="UniProtKB-SubCell"/>
</dbReference>
<dbReference type="GO" id="GO:0045259">
    <property type="term" value="C:proton-transporting ATP synthase complex"/>
    <property type="evidence" value="ECO:0007669"/>
    <property type="project" value="UniProtKB-KW"/>
</dbReference>
<dbReference type="GO" id="GO:0046933">
    <property type="term" value="F:proton-transporting ATP synthase activity, rotational mechanism"/>
    <property type="evidence" value="ECO:0007669"/>
    <property type="project" value="UniProtKB-UniRule"/>
</dbReference>
<dbReference type="CDD" id="cd06503">
    <property type="entry name" value="ATP-synt_Fo_b"/>
    <property type="match status" value="1"/>
</dbReference>
<dbReference type="HAMAP" id="MF_01398">
    <property type="entry name" value="ATP_synth_b_bprime"/>
    <property type="match status" value="1"/>
</dbReference>
<dbReference type="InterPro" id="IPR028987">
    <property type="entry name" value="ATP_synth_B-like_membr_sf"/>
</dbReference>
<dbReference type="InterPro" id="IPR002146">
    <property type="entry name" value="ATP_synth_b/b'su_bac/chlpt"/>
</dbReference>
<dbReference type="NCBIfam" id="NF005606">
    <property type="entry name" value="PRK07352.1"/>
    <property type="match status" value="1"/>
</dbReference>
<dbReference type="PANTHER" id="PTHR34264">
    <property type="entry name" value="ATP SYNTHASE SUBUNIT B, CHLOROPLASTIC"/>
    <property type="match status" value="1"/>
</dbReference>
<dbReference type="PANTHER" id="PTHR34264:SF3">
    <property type="entry name" value="ATP SYNTHASE SUBUNIT B, CHLOROPLASTIC"/>
    <property type="match status" value="1"/>
</dbReference>
<dbReference type="Pfam" id="PF00430">
    <property type="entry name" value="ATP-synt_B"/>
    <property type="match status" value="1"/>
</dbReference>
<dbReference type="SUPFAM" id="SSF81573">
    <property type="entry name" value="F1F0 ATP synthase subunit B, membrane domain"/>
    <property type="match status" value="1"/>
</dbReference>
<sequence length="171" mass="18869">MISSLFFATKGFGLNLNLFETNVINLAVVIFGLYKFLPNFLGGILERRRSAILADLKDAEDRLTEANTALAKAKNELASAEQKAEKIRSDCKVRAEAIRLESEKKTVEEMARVKQGAAADLNAEASRVSTQLRREAAKLAIEKALVSLPNKLDEKAQLNFISQSIKNMGKD</sequence>
<feature type="chain" id="PRO_0000368664" description="ATP synthase subunit b">
    <location>
        <begin position="1"/>
        <end position="171"/>
    </location>
</feature>
<feature type="transmembrane region" description="Helical" evidence="1">
    <location>
        <begin position="12"/>
        <end position="34"/>
    </location>
</feature>
<keyword id="KW-0066">ATP synthesis</keyword>
<keyword id="KW-0138">CF(0)</keyword>
<keyword id="KW-0375">Hydrogen ion transport</keyword>
<keyword id="KW-0406">Ion transport</keyword>
<keyword id="KW-0472">Membrane</keyword>
<keyword id="KW-1185">Reference proteome</keyword>
<keyword id="KW-0793">Thylakoid</keyword>
<keyword id="KW-0812">Transmembrane</keyword>
<keyword id="KW-1133">Transmembrane helix</keyword>
<keyword id="KW-0813">Transport</keyword>
<comment type="function">
    <text evidence="1">F(1)F(0) ATP synthase produces ATP from ADP in the presence of a proton or sodium gradient. F-type ATPases consist of two structural domains, F(1) containing the extramembraneous catalytic core and F(0) containing the membrane proton channel, linked together by a central stalk and a peripheral stalk. During catalysis, ATP synthesis in the catalytic domain of F(1) is coupled via a rotary mechanism of the central stalk subunits to proton translocation.</text>
</comment>
<comment type="function">
    <text evidence="1">Component of the F(0) channel, it forms part of the peripheral stalk, linking F(1) to F(0).</text>
</comment>
<comment type="subunit">
    <text evidence="1">F-type ATPases have 2 components, F(1) - the catalytic core - and F(0) - the membrane proton channel. F(1) has five subunits: alpha(3), beta(3), gamma(1), delta(1), epsilon(1). F(0) has four main subunits: a(1), b(1), b'(1) and c(10-14). The alpha and beta chains form an alternating ring which encloses part of the gamma chain. F(1) is attached to F(0) by a central stalk formed by the gamma and epsilon chains, while a peripheral stalk is formed by the delta, b and b' chains.</text>
</comment>
<comment type="subcellular location">
    <subcellularLocation>
        <location evidence="1">Cellular thylakoid membrane</location>
        <topology evidence="1">Single-pass membrane protein</topology>
    </subcellularLocation>
</comment>
<comment type="similarity">
    <text evidence="1">Belongs to the ATPase B chain family.</text>
</comment>
<name>ATPF_PROM4</name>
<evidence type="ECO:0000255" key="1">
    <source>
        <dbReference type="HAMAP-Rule" id="MF_01398"/>
    </source>
</evidence>
<reference key="1">
    <citation type="journal article" date="2007" name="PLoS Genet.">
        <title>Patterns and implications of gene gain and loss in the evolution of Prochlorococcus.</title>
        <authorList>
            <person name="Kettler G.C."/>
            <person name="Martiny A.C."/>
            <person name="Huang K."/>
            <person name="Zucker J."/>
            <person name="Coleman M.L."/>
            <person name="Rodrigue S."/>
            <person name="Chen F."/>
            <person name="Lapidus A."/>
            <person name="Ferriera S."/>
            <person name="Johnson J."/>
            <person name="Steglich C."/>
            <person name="Church G.M."/>
            <person name="Richardson P."/>
            <person name="Chisholm S.W."/>
        </authorList>
    </citation>
    <scope>NUCLEOTIDE SEQUENCE [LARGE SCALE GENOMIC DNA]</scope>
    <source>
        <strain>MIT 9211</strain>
    </source>
</reference>
<gene>
    <name evidence="1" type="primary">atpF</name>
    <name type="ordered locus">P9211_15721</name>
</gene>
<accession>A9BCE1</accession>